<protein>
    <recommendedName>
        <fullName evidence="1">Histidine--tRNA ligase</fullName>
        <ecNumber evidence="1">6.1.1.21</ecNumber>
    </recommendedName>
    <alternativeName>
        <fullName evidence="1">Histidyl-tRNA synthetase</fullName>
        <shortName evidence="1">HisRS</shortName>
    </alternativeName>
</protein>
<sequence length="435" mass="47951">MASLQALRGTRDILPPETQVWQWIEQTAREILGRAAVQEVRTPIFEQTALFERGIGEATDVVGKEMYSFRDRGDRSLTLRPEGTAGTVRAYIEHGLASQGGVQRLRYTGPMFRYERPQAGRQRQFHQLGLELLGTADARADAEAIALATQILQALGLKNLRLDLNSVGDACDRAAYRQALVDYLTPYAADLDPDSRDRLERNPLRILDSKDERTQAIVAEAPSLHDYLSERSRQLFEQVQQLLTHLGIDYRLEPKLVRGLDYYTHTAFEIISSDLGAQATVCGGGRYDGLVSQLGGPETPAVGWAMGLERLVLLLQQGQAVPPATLDFYLVSRGAIAEGQALILAQKLRSAGFGVELDLSGSAFGKQFKRADRSGAIACLVLGDAEAEQGQVNLKWLQSGEQQTLDQSELLQDSDHWRSRLQAARTVSPVEVAPL</sequence>
<feature type="chain" id="PRO_0000136277" description="Histidine--tRNA ligase">
    <location>
        <begin position="1"/>
        <end position="435"/>
    </location>
</feature>
<dbReference type="EC" id="6.1.1.21" evidence="1"/>
<dbReference type="EMBL" id="AP008231">
    <property type="protein sequence ID" value="BAD80025.1"/>
    <property type="molecule type" value="Genomic_DNA"/>
</dbReference>
<dbReference type="RefSeq" id="WP_011244145.1">
    <property type="nucleotide sequence ID" value="NC_006576.1"/>
</dbReference>
<dbReference type="SMR" id="Q5N0Z5"/>
<dbReference type="KEGG" id="syc:syc1835_d"/>
<dbReference type="eggNOG" id="COG0124">
    <property type="taxonomic scope" value="Bacteria"/>
</dbReference>
<dbReference type="Proteomes" id="UP000001175">
    <property type="component" value="Chromosome"/>
</dbReference>
<dbReference type="GO" id="GO:0005737">
    <property type="term" value="C:cytoplasm"/>
    <property type="evidence" value="ECO:0007669"/>
    <property type="project" value="UniProtKB-SubCell"/>
</dbReference>
<dbReference type="GO" id="GO:0005524">
    <property type="term" value="F:ATP binding"/>
    <property type="evidence" value="ECO:0007669"/>
    <property type="project" value="UniProtKB-UniRule"/>
</dbReference>
<dbReference type="GO" id="GO:0004821">
    <property type="term" value="F:histidine-tRNA ligase activity"/>
    <property type="evidence" value="ECO:0007669"/>
    <property type="project" value="UniProtKB-UniRule"/>
</dbReference>
<dbReference type="GO" id="GO:0006427">
    <property type="term" value="P:histidyl-tRNA aminoacylation"/>
    <property type="evidence" value="ECO:0007669"/>
    <property type="project" value="UniProtKB-UniRule"/>
</dbReference>
<dbReference type="CDD" id="cd00773">
    <property type="entry name" value="HisRS-like_core"/>
    <property type="match status" value="1"/>
</dbReference>
<dbReference type="CDD" id="cd00859">
    <property type="entry name" value="HisRS_anticodon"/>
    <property type="match status" value="1"/>
</dbReference>
<dbReference type="FunFam" id="3.30.930.10:FF:000005">
    <property type="entry name" value="Histidine--tRNA ligase"/>
    <property type="match status" value="1"/>
</dbReference>
<dbReference type="Gene3D" id="3.40.50.800">
    <property type="entry name" value="Anticodon-binding domain"/>
    <property type="match status" value="1"/>
</dbReference>
<dbReference type="Gene3D" id="3.30.930.10">
    <property type="entry name" value="Bira Bifunctional Protein, Domain 2"/>
    <property type="match status" value="1"/>
</dbReference>
<dbReference type="HAMAP" id="MF_00127">
    <property type="entry name" value="His_tRNA_synth"/>
    <property type="match status" value="1"/>
</dbReference>
<dbReference type="InterPro" id="IPR006195">
    <property type="entry name" value="aa-tRNA-synth_II"/>
</dbReference>
<dbReference type="InterPro" id="IPR045864">
    <property type="entry name" value="aa-tRNA-synth_II/BPL/LPL"/>
</dbReference>
<dbReference type="InterPro" id="IPR004154">
    <property type="entry name" value="Anticodon-bd"/>
</dbReference>
<dbReference type="InterPro" id="IPR036621">
    <property type="entry name" value="Anticodon-bd_dom_sf"/>
</dbReference>
<dbReference type="InterPro" id="IPR015807">
    <property type="entry name" value="His-tRNA-ligase"/>
</dbReference>
<dbReference type="InterPro" id="IPR041715">
    <property type="entry name" value="HisRS-like_core"/>
</dbReference>
<dbReference type="InterPro" id="IPR004516">
    <property type="entry name" value="HisRS/HisZ"/>
</dbReference>
<dbReference type="InterPro" id="IPR033656">
    <property type="entry name" value="HisRS_anticodon"/>
</dbReference>
<dbReference type="NCBIfam" id="TIGR00442">
    <property type="entry name" value="hisS"/>
    <property type="match status" value="1"/>
</dbReference>
<dbReference type="PANTHER" id="PTHR43707:SF1">
    <property type="entry name" value="HISTIDINE--TRNA LIGASE, MITOCHONDRIAL-RELATED"/>
    <property type="match status" value="1"/>
</dbReference>
<dbReference type="PANTHER" id="PTHR43707">
    <property type="entry name" value="HISTIDYL-TRNA SYNTHETASE"/>
    <property type="match status" value="1"/>
</dbReference>
<dbReference type="Pfam" id="PF03129">
    <property type="entry name" value="HGTP_anticodon"/>
    <property type="match status" value="1"/>
</dbReference>
<dbReference type="Pfam" id="PF13393">
    <property type="entry name" value="tRNA-synt_His"/>
    <property type="match status" value="1"/>
</dbReference>
<dbReference type="PIRSF" id="PIRSF001549">
    <property type="entry name" value="His-tRNA_synth"/>
    <property type="match status" value="1"/>
</dbReference>
<dbReference type="SUPFAM" id="SSF52954">
    <property type="entry name" value="Class II aaRS ABD-related"/>
    <property type="match status" value="1"/>
</dbReference>
<dbReference type="SUPFAM" id="SSF55681">
    <property type="entry name" value="Class II aaRS and biotin synthetases"/>
    <property type="match status" value="1"/>
</dbReference>
<dbReference type="PROSITE" id="PS50862">
    <property type="entry name" value="AA_TRNA_LIGASE_II"/>
    <property type="match status" value="1"/>
</dbReference>
<comment type="catalytic activity">
    <reaction evidence="1">
        <text>tRNA(His) + L-histidine + ATP = L-histidyl-tRNA(His) + AMP + diphosphate + H(+)</text>
        <dbReference type="Rhea" id="RHEA:17313"/>
        <dbReference type="Rhea" id="RHEA-COMP:9665"/>
        <dbReference type="Rhea" id="RHEA-COMP:9689"/>
        <dbReference type="ChEBI" id="CHEBI:15378"/>
        <dbReference type="ChEBI" id="CHEBI:30616"/>
        <dbReference type="ChEBI" id="CHEBI:33019"/>
        <dbReference type="ChEBI" id="CHEBI:57595"/>
        <dbReference type="ChEBI" id="CHEBI:78442"/>
        <dbReference type="ChEBI" id="CHEBI:78527"/>
        <dbReference type="ChEBI" id="CHEBI:456215"/>
        <dbReference type="EC" id="6.1.1.21"/>
    </reaction>
</comment>
<comment type="subunit">
    <text evidence="1">Homodimer.</text>
</comment>
<comment type="subcellular location">
    <subcellularLocation>
        <location evidence="1">Cytoplasm</location>
    </subcellularLocation>
</comment>
<comment type="similarity">
    <text evidence="1">Belongs to the class-II aminoacyl-tRNA synthetase family.</text>
</comment>
<gene>
    <name evidence="1" type="primary">hisS</name>
    <name type="ordered locus">syc1835_d</name>
</gene>
<name>SYH_SYNP6</name>
<accession>Q5N0Z5</accession>
<evidence type="ECO:0000255" key="1">
    <source>
        <dbReference type="HAMAP-Rule" id="MF_00127"/>
    </source>
</evidence>
<keyword id="KW-0030">Aminoacyl-tRNA synthetase</keyword>
<keyword id="KW-0067">ATP-binding</keyword>
<keyword id="KW-0963">Cytoplasm</keyword>
<keyword id="KW-0436">Ligase</keyword>
<keyword id="KW-0547">Nucleotide-binding</keyword>
<keyword id="KW-0648">Protein biosynthesis</keyword>
<proteinExistence type="inferred from homology"/>
<organism>
    <name type="scientific">Synechococcus sp. (strain ATCC 27144 / PCC 6301 / SAUG 1402/1)</name>
    <name type="common">Anacystis nidulans</name>
    <dbReference type="NCBI Taxonomy" id="269084"/>
    <lineage>
        <taxon>Bacteria</taxon>
        <taxon>Bacillati</taxon>
        <taxon>Cyanobacteriota</taxon>
        <taxon>Cyanophyceae</taxon>
        <taxon>Synechococcales</taxon>
        <taxon>Synechococcaceae</taxon>
        <taxon>Synechococcus</taxon>
    </lineage>
</organism>
<reference key="1">
    <citation type="journal article" date="2007" name="Photosyn. Res.">
        <title>Complete nucleotide sequence of the freshwater unicellular cyanobacterium Synechococcus elongatus PCC 6301 chromosome: gene content and organization.</title>
        <authorList>
            <person name="Sugita C."/>
            <person name="Ogata K."/>
            <person name="Shikata M."/>
            <person name="Jikuya H."/>
            <person name="Takano J."/>
            <person name="Furumichi M."/>
            <person name="Kanehisa M."/>
            <person name="Omata T."/>
            <person name="Sugiura M."/>
            <person name="Sugita M."/>
        </authorList>
    </citation>
    <scope>NUCLEOTIDE SEQUENCE [LARGE SCALE GENOMIC DNA]</scope>
    <source>
        <strain>ATCC 27144 / PCC 6301 / SAUG 1402/1</strain>
    </source>
</reference>